<accession>A4YBW9</accession>
<reference key="1">
    <citation type="submission" date="2007-04" db="EMBL/GenBank/DDBJ databases">
        <title>Complete sequence of Shewanella putrefaciens CN-32.</title>
        <authorList>
            <consortium name="US DOE Joint Genome Institute"/>
            <person name="Copeland A."/>
            <person name="Lucas S."/>
            <person name="Lapidus A."/>
            <person name="Barry K."/>
            <person name="Detter J.C."/>
            <person name="Glavina del Rio T."/>
            <person name="Hammon N."/>
            <person name="Israni S."/>
            <person name="Dalin E."/>
            <person name="Tice H."/>
            <person name="Pitluck S."/>
            <person name="Chain P."/>
            <person name="Malfatti S."/>
            <person name="Shin M."/>
            <person name="Vergez L."/>
            <person name="Schmutz J."/>
            <person name="Larimer F."/>
            <person name="Land M."/>
            <person name="Hauser L."/>
            <person name="Kyrpides N."/>
            <person name="Mikhailova N."/>
            <person name="Romine M.F."/>
            <person name="Fredrickson J."/>
            <person name="Tiedje J."/>
            <person name="Richardson P."/>
        </authorList>
    </citation>
    <scope>NUCLEOTIDE SEQUENCE [LARGE SCALE GENOMIC DNA]</scope>
    <source>
        <strain>CN-32 / ATCC BAA-453</strain>
    </source>
</reference>
<sequence>MSMQDPIADMLTRIRNGQAANKVSVKMPSAKLKVAIAKLLKEEGYIADYAVADEAKPELEITLKYFQGQPVVETIQRVSRPGLRIYKGKNELPKVMGGLGVAIVSTSKGLMTDRAARLAGMGGEVICYVA</sequence>
<feature type="chain" id="PRO_1000051799" description="Small ribosomal subunit protein uS8">
    <location>
        <begin position="1"/>
        <end position="130"/>
    </location>
</feature>
<dbReference type="EMBL" id="CP000681">
    <property type="protein sequence ID" value="ABP77452.1"/>
    <property type="molecule type" value="Genomic_DNA"/>
</dbReference>
<dbReference type="SMR" id="A4YBW9"/>
<dbReference type="STRING" id="319224.Sputcn32_3745"/>
<dbReference type="KEGG" id="spc:Sputcn32_3745"/>
<dbReference type="eggNOG" id="COG0096">
    <property type="taxonomic scope" value="Bacteria"/>
</dbReference>
<dbReference type="HOGENOM" id="CLU_098428_0_0_6"/>
<dbReference type="GO" id="GO:1990904">
    <property type="term" value="C:ribonucleoprotein complex"/>
    <property type="evidence" value="ECO:0007669"/>
    <property type="project" value="UniProtKB-KW"/>
</dbReference>
<dbReference type="GO" id="GO:0005840">
    <property type="term" value="C:ribosome"/>
    <property type="evidence" value="ECO:0007669"/>
    <property type="project" value="UniProtKB-KW"/>
</dbReference>
<dbReference type="GO" id="GO:0019843">
    <property type="term" value="F:rRNA binding"/>
    <property type="evidence" value="ECO:0007669"/>
    <property type="project" value="UniProtKB-UniRule"/>
</dbReference>
<dbReference type="GO" id="GO:0003735">
    <property type="term" value="F:structural constituent of ribosome"/>
    <property type="evidence" value="ECO:0007669"/>
    <property type="project" value="InterPro"/>
</dbReference>
<dbReference type="GO" id="GO:0006412">
    <property type="term" value="P:translation"/>
    <property type="evidence" value="ECO:0007669"/>
    <property type="project" value="UniProtKB-UniRule"/>
</dbReference>
<dbReference type="FunFam" id="3.30.1370.30:FF:000003">
    <property type="entry name" value="30S ribosomal protein S8"/>
    <property type="match status" value="1"/>
</dbReference>
<dbReference type="FunFam" id="3.30.1490.10:FF:000001">
    <property type="entry name" value="30S ribosomal protein S8"/>
    <property type="match status" value="1"/>
</dbReference>
<dbReference type="Gene3D" id="3.30.1370.30">
    <property type="match status" value="1"/>
</dbReference>
<dbReference type="Gene3D" id="3.30.1490.10">
    <property type="match status" value="1"/>
</dbReference>
<dbReference type="HAMAP" id="MF_01302_B">
    <property type="entry name" value="Ribosomal_uS8_B"/>
    <property type="match status" value="1"/>
</dbReference>
<dbReference type="InterPro" id="IPR000630">
    <property type="entry name" value="Ribosomal_uS8"/>
</dbReference>
<dbReference type="InterPro" id="IPR047863">
    <property type="entry name" value="Ribosomal_uS8_CS"/>
</dbReference>
<dbReference type="InterPro" id="IPR035987">
    <property type="entry name" value="Ribosomal_uS8_sf"/>
</dbReference>
<dbReference type="NCBIfam" id="NF001109">
    <property type="entry name" value="PRK00136.1"/>
    <property type="match status" value="1"/>
</dbReference>
<dbReference type="PANTHER" id="PTHR11758">
    <property type="entry name" value="40S RIBOSOMAL PROTEIN S15A"/>
    <property type="match status" value="1"/>
</dbReference>
<dbReference type="Pfam" id="PF00410">
    <property type="entry name" value="Ribosomal_S8"/>
    <property type="match status" value="1"/>
</dbReference>
<dbReference type="SUPFAM" id="SSF56047">
    <property type="entry name" value="Ribosomal protein S8"/>
    <property type="match status" value="1"/>
</dbReference>
<dbReference type="PROSITE" id="PS00053">
    <property type="entry name" value="RIBOSOMAL_S8"/>
    <property type="match status" value="1"/>
</dbReference>
<evidence type="ECO:0000255" key="1">
    <source>
        <dbReference type="HAMAP-Rule" id="MF_01302"/>
    </source>
</evidence>
<evidence type="ECO:0000305" key="2"/>
<name>RS8_SHEPC</name>
<protein>
    <recommendedName>
        <fullName evidence="1">Small ribosomal subunit protein uS8</fullName>
    </recommendedName>
    <alternativeName>
        <fullName evidence="2">30S ribosomal protein S8</fullName>
    </alternativeName>
</protein>
<organism>
    <name type="scientific">Shewanella putrefaciens (strain CN-32 / ATCC BAA-453)</name>
    <dbReference type="NCBI Taxonomy" id="319224"/>
    <lineage>
        <taxon>Bacteria</taxon>
        <taxon>Pseudomonadati</taxon>
        <taxon>Pseudomonadota</taxon>
        <taxon>Gammaproteobacteria</taxon>
        <taxon>Alteromonadales</taxon>
        <taxon>Shewanellaceae</taxon>
        <taxon>Shewanella</taxon>
    </lineage>
</organism>
<comment type="function">
    <text evidence="1">One of the primary rRNA binding proteins, it binds directly to 16S rRNA central domain where it helps coordinate assembly of the platform of the 30S subunit.</text>
</comment>
<comment type="subunit">
    <text evidence="1">Part of the 30S ribosomal subunit. Contacts proteins S5 and S12.</text>
</comment>
<comment type="similarity">
    <text evidence="1">Belongs to the universal ribosomal protein uS8 family.</text>
</comment>
<gene>
    <name evidence="1" type="primary">rpsH</name>
    <name type="ordered locus">Sputcn32_3745</name>
</gene>
<keyword id="KW-0687">Ribonucleoprotein</keyword>
<keyword id="KW-0689">Ribosomal protein</keyword>
<keyword id="KW-0694">RNA-binding</keyword>
<keyword id="KW-0699">rRNA-binding</keyword>
<proteinExistence type="inferred from homology"/>